<dbReference type="EC" id="5.4.2.12" evidence="1"/>
<dbReference type="EMBL" id="AE010299">
    <property type="protein sequence ID" value="AAM06049.1"/>
    <property type="molecule type" value="Genomic_DNA"/>
</dbReference>
<dbReference type="RefSeq" id="WP_011022631.1">
    <property type="nucleotide sequence ID" value="NC_003552.1"/>
</dbReference>
<dbReference type="SMR" id="Q8TMI6"/>
<dbReference type="STRING" id="188937.MA_2671"/>
<dbReference type="EnsemblBacteria" id="AAM06049">
    <property type="protein sequence ID" value="AAM06049"/>
    <property type="gene ID" value="MA_2671"/>
</dbReference>
<dbReference type="GeneID" id="1474560"/>
<dbReference type="KEGG" id="mac:MA_2671"/>
<dbReference type="HOGENOM" id="CLU_026099_2_0_2"/>
<dbReference type="InParanoid" id="Q8TMI6"/>
<dbReference type="OrthoDB" id="146005at2157"/>
<dbReference type="PhylomeDB" id="Q8TMI6"/>
<dbReference type="UniPathway" id="UPA00109">
    <property type="reaction ID" value="UER00186"/>
</dbReference>
<dbReference type="Proteomes" id="UP000002487">
    <property type="component" value="Chromosome"/>
</dbReference>
<dbReference type="GO" id="GO:0005737">
    <property type="term" value="C:cytoplasm"/>
    <property type="evidence" value="ECO:0007669"/>
    <property type="project" value="InterPro"/>
</dbReference>
<dbReference type="GO" id="GO:0030145">
    <property type="term" value="F:manganese ion binding"/>
    <property type="evidence" value="ECO:0000318"/>
    <property type="project" value="GO_Central"/>
</dbReference>
<dbReference type="GO" id="GO:0004619">
    <property type="term" value="F:phosphoglycerate mutase activity"/>
    <property type="evidence" value="ECO:0000318"/>
    <property type="project" value="GO_Central"/>
</dbReference>
<dbReference type="GO" id="GO:0005975">
    <property type="term" value="P:carbohydrate metabolic process"/>
    <property type="evidence" value="ECO:0000318"/>
    <property type="project" value="GO_Central"/>
</dbReference>
<dbReference type="GO" id="GO:0006007">
    <property type="term" value="P:glucose catabolic process"/>
    <property type="evidence" value="ECO:0007669"/>
    <property type="project" value="InterPro"/>
</dbReference>
<dbReference type="GO" id="GO:0006096">
    <property type="term" value="P:glycolytic process"/>
    <property type="evidence" value="ECO:0007669"/>
    <property type="project" value="UniProtKB-UniRule"/>
</dbReference>
<dbReference type="CDD" id="cd16010">
    <property type="entry name" value="iPGM"/>
    <property type="match status" value="1"/>
</dbReference>
<dbReference type="FunFam" id="3.40.1450.10:FF:000001">
    <property type="entry name" value="2,3-bisphosphoglycerate-independent phosphoglycerate mutase"/>
    <property type="match status" value="1"/>
</dbReference>
<dbReference type="FunFam" id="3.40.720.10:FF:000001">
    <property type="entry name" value="2,3-bisphosphoglycerate-independent phosphoglycerate mutase"/>
    <property type="match status" value="1"/>
</dbReference>
<dbReference type="Gene3D" id="3.40.720.10">
    <property type="entry name" value="Alkaline Phosphatase, subunit A"/>
    <property type="match status" value="1"/>
</dbReference>
<dbReference type="Gene3D" id="3.40.1450.10">
    <property type="entry name" value="BPG-independent phosphoglycerate mutase, domain B"/>
    <property type="match status" value="1"/>
</dbReference>
<dbReference type="HAMAP" id="MF_01038">
    <property type="entry name" value="GpmI"/>
    <property type="match status" value="1"/>
</dbReference>
<dbReference type="InterPro" id="IPR017850">
    <property type="entry name" value="Alkaline_phosphatase_core_sf"/>
</dbReference>
<dbReference type="InterPro" id="IPR011258">
    <property type="entry name" value="BPG-indep_PGM_N"/>
</dbReference>
<dbReference type="InterPro" id="IPR006124">
    <property type="entry name" value="Metalloenzyme"/>
</dbReference>
<dbReference type="InterPro" id="IPR036646">
    <property type="entry name" value="PGAM_B_sf"/>
</dbReference>
<dbReference type="InterPro" id="IPR005995">
    <property type="entry name" value="Pgm_bpd_ind"/>
</dbReference>
<dbReference type="NCBIfam" id="TIGR01307">
    <property type="entry name" value="pgm_bpd_ind"/>
    <property type="match status" value="1"/>
</dbReference>
<dbReference type="PANTHER" id="PTHR31637">
    <property type="entry name" value="2,3-BISPHOSPHOGLYCERATE-INDEPENDENT PHOSPHOGLYCERATE MUTASE"/>
    <property type="match status" value="1"/>
</dbReference>
<dbReference type="PANTHER" id="PTHR31637:SF0">
    <property type="entry name" value="2,3-BISPHOSPHOGLYCERATE-INDEPENDENT PHOSPHOGLYCERATE MUTASE"/>
    <property type="match status" value="1"/>
</dbReference>
<dbReference type="Pfam" id="PF06415">
    <property type="entry name" value="iPGM_N"/>
    <property type="match status" value="1"/>
</dbReference>
<dbReference type="Pfam" id="PF01676">
    <property type="entry name" value="Metalloenzyme"/>
    <property type="match status" value="1"/>
</dbReference>
<dbReference type="PIRSF" id="PIRSF001492">
    <property type="entry name" value="IPGAM"/>
    <property type="match status" value="1"/>
</dbReference>
<dbReference type="SUPFAM" id="SSF64158">
    <property type="entry name" value="2,3-Bisphosphoglycerate-independent phosphoglycerate mutase, substrate-binding domain"/>
    <property type="match status" value="1"/>
</dbReference>
<dbReference type="SUPFAM" id="SSF53649">
    <property type="entry name" value="Alkaline phosphatase-like"/>
    <property type="match status" value="1"/>
</dbReference>
<gene>
    <name evidence="1" type="primary">gpmI1</name>
    <name type="ordered locus">MA_2671</name>
</gene>
<accession>Q8TMI6</accession>
<comment type="function">
    <text evidence="1">Catalyzes the interconversion of 2-phosphoglycerate and 3-phosphoglycerate.</text>
</comment>
<comment type="catalytic activity">
    <reaction evidence="1">
        <text>(2R)-2-phosphoglycerate = (2R)-3-phosphoglycerate</text>
        <dbReference type="Rhea" id="RHEA:15901"/>
        <dbReference type="ChEBI" id="CHEBI:58272"/>
        <dbReference type="ChEBI" id="CHEBI:58289"/>
        <dbReference type="EC" id="5.4.2.12"/>
    </reaction>
</comment>
<comment type="cofactor">
    <cofactor evidence="1">
        <name>Mn(2+)</name>
        <dbReference type="ChEBI" id="CHEBI:29035"/>
    </cofactor>
    <text evidence="1">Binds 2 manganese ions per subunit.</text>
</comment>
<comment type="pathway">
    <text evidence="1">Carbohydrate degradation; glycolysis; pyruvate from D-glyceraldehyde 3-phosphate: step 3/5.</text>
</comment>
<comment type="similarity">
    <text evidence="1">Belongs to the BPG-independent phosphoglycerate mutase family.</text>
</comment>
<organism>
    <name type="scientific">Methanosarcina acetivorans (strain ATCC 35395 / DSM 2834 / JCM 12185 / C2A)</name>
    <dbReference type="NCBI Taxonomy" id="188937"/>
    <lineage>
        <taxon>Archaea</taxon>
        <taxon>Methanobacteriati</taxon>
        <taxon>Methanobacteriota</taxon>
        <taxon>Stenosarchaea group</taxon>
        <taxon>Methanomicrobia</taxon>
        <taxon>Methanosarcinales</taxon>
        <taxon>Methanosarcinaceae</taxon>
        <taxon>Methanosarcina</taxon>
    </lineage>
</organism>
<evidence type="ECO:0000255" key="1">
    <source>
        <dbReference type="HAMAP-Rule" id="MF_01038"/>
    </source>
</evidence>
<proteinExistence type="inferred from homology"/>
<feature type="chain" id="PRO_0000212238" description="2,3-bisphosphoglycerate-independent phosphoglycerate mutase 1">
    <location>
        <begin position="1"/>
        <end position="515"/>
    </location>
</feature>
<feature type="active site" description="Phosphoserine intermediate" evidence="1">
    <location>
        <position position="64"/>
    </location>
</feature>
<feature type="binding site" evidence="1">
    <location>
        <position position="14"/>
    </location>
    <ligand>
        <name>Mn(2+)</name>
        <dbReference type="ChEBI" id="CHEBI:29035"/>
        <label>2</label>
    </ligand>
</feature>
<feature type="binding site" evidence="1">
    <location>
        <position position="64"/>
    </location>
    <ligand>
        <name>Mn(2+)</name>
        <dbReference type="ChEBI" id="CHEBI:29035"/>
        <label>2</label>
    </ligand>
</feature>
<feature type="binding site" evidence="1">
    <location>
        <position position="125"/>
    </location>
    <ligand>
        <name>substrate</name>
    </ligand>
</feature>
<feature type="binding site" evidence="1">
    <location>
        <begin position="155"/>
        <end position="156"/>
    </location>
    <ligand>
        <name>substrate</name>
    </ligand>
</feature>
<feature type="binding site" evidence="1">
    <location>
        <position position="187"/>
    </location>
    <ligand>
        <name>substrate</name>
    </ligand>
</feature>
<feature type="binding site" evidence="1">
    <location>
        <position position="193"/>
    </location>
    <ligand>
        <name>substrate</name>
    </ligand>
</feature>
<feature type="binding site" evidence="1">
    <location>
        <begin position="264"/>
        <end position="267"/>
    </location>
    <ligand>
        <name>substrate</name>
    </ligand>
</feature>
<feature type="binding site" evidence="1">
    <location>
        <position position="337"/>
    </location>
    <ligand>
        <name>substrate</name>
    </ligand>
</feature>
<feature type="binding site" evidence="1">
    <location>
        <position position="404"/>
    </location>
    <ligand>
        <name>Mn(2+)</name>
        <dbReference type="ChEBI" id="CHEBI:29035"/>
        <label>1</label>
    </ligand>
</feature>
<feature type="binding site" evidence="1">
    <location>
        <position position="408"/>
    </location>
    <ligand>
        <name>Mn(2+)</name>
        <dbReference type="ChEBI" id="CHEBI:29035"/>
        <label>1</label>
    </ligand>
</feature>
<feature type="binding site" evidence="1">
    <location>
        <position position="445"/>
    </location>
    <ligand>
        <name>Mn(2+)</name>
        <dbReference type="ChEBI" id="CHEBI:29035"/>
        <label>2</label>
    </ligand>
</feature>
<feature type="binding site" evidence="1">
    <location>
        <position position="446"/>
    </location>
    <ligand>
        <name>Mn(2+)</name>
        <dbReference type="ChEBI" id="CHEBI:29035"/>
        <label>2</label>
    </ligand>
</feature>
<feature type="binding site" evidence="1">
    <location>
        <position position="464"/>
    </location>
    <ligand>
        <name>Mn(2+)</name>
        <dbReference type="ChEBI" id="CHEBI:29035"/>
        <label>1</label>
    </ligand>
</feature>
<protein>
    <recommendedName>
        <fullName evidence="1">2,3-bisphosphoglycerate-independent phosphoglycerate mutase 1</fullName>
        <shortName evidence="1">BPG-independent PGAM 1</shortName>
        <shortName evidence="1">Phosphoglyceromutase 1</shortName>
        <shortName evidence="1">iPGM 1</shortName>
        <ecNumber evidence="1">5.4.2.12</ecNumber>
    </recommendedName>
</protein>
<reference key="1">
    <citation type="journal article" date="2002" name="Genome Res.">
        <title>The genome of Methanosarcina acetivorans reveals extensive metabolic and physiological diversity.</title>
        <authorList>
            <person name="Galagan J.E."/>
            <person name="Nusbaum C."/>
            <person name="Roy A."/>
            <person name="Endrizzi M.G."/>
            <person name="Macdonald P."/>
            <person name="FitzHugh W."/>
            <person name="Calvo S."/>
            <person name="Engels R."/>
            <person name="Smirnov S."/>
            <person name="Atnoor D."/>
            <person name="Brown A."/>
            <person name="Allen N."/>
            <person name="Naylor J."/>
            <person name="Stange-Thomann N."/>
            <person name="DeArellano K."/>
            <person name="Johnson R."/>
            <person name="Linton L."/>
            <person name="McEwan P."/>
            <person name="McKernan K."/>
            <person name="Talamas J."/>
            <person name="Tirrell A."/>
            <person name="Ye W."/>
            <person name="Zimmer A."/>
            <person name="Barber R.D."/>
            <person name="Cann I."/>
            <person name="Graham D.E."/>
            <person name="Grahame D.A."/>
            <person name="Guss A.M."/>
            <person name="Hedderich R."/>
            <person name="Ingram-Smith C."/>
            <person name="Kuettner H.C."/>
            <person name="Krzycki J.A."/>
            <person name="Leigh J.A."/>
            <person name="Li W."/>
            <person name="Liu J."/>
            <person name="Mukhopadhyay B."/>
            <person name="Reeve J.N."/>
            <person name="Smith K."/>
            <person name="Springer T.A."/>
            <person name="Umayam L.A."/>
            <person name="White O."/>
            <person name="White R.H."/>
            <person name="de Macario E.C."/>
            <person name="Ferry J.G."/>
            <person name="Jarrell K.F."/>
            <person name="Jing H."/>
            <person name="Macario A.J.L."/>
            <person name="Paulsen I.T."/>
            <person name="Pritchett M."/>
            <person name="Sowers K.R."/>
            <person name="Swanson R.V."/>
            <person name="Zinder S.H."/>
            <person name="Lander E."/>
            <person name="Metcalf W.W."/>
            <person name="Birren B."/>
        </authorList>
    </citation>
    <scope>NUCLEOTIDE SEQUENCE [LARGE SCALE GENOMIC DNA]</scope>
    <source>
        <strain>ATCC 35395 / DSM 2834 / JCM 12185 / C2A</strain>
    </source>
</reference>
<sequence length="515" mass="57175">MAQARRPLMLIILDGWGYREVEEGNAVLSAGTPNLDRLVKDYPWCLLEASGGAVGLPEGMMGNSEDGHLNIGAGRIVYQNLTRINISIRNGDFFKNPVFLNAISKVKANDSSLHLIGLVSCGGVHSYTPHLHALIKLAKEKGLKKVYIHAFLDGRDVPPKTALGDIKKLNEFCKEHGGAKIATVSGRYYAMDRDKRWDRTKLAYDVLTLGASQYKAPNAETAVSEAYGRGETDEFVKPTVITDHEEKPVATIRDKDSVIFFNFRADRARQLTWAFVKDDFDGFVREKRPKIYFVCMARYDEDLDLPVAFPHEELKNVLGEVLSKQGLTQLRIAETEKYAHVTFFLNGGEEKRYEGEDRCLIPSPKIATYDLKPEMSAYKITDEVVRRIQSGKYDVIVLNFANMDMVGHTGIFEAAVKAVEAVDKCIGRIVEALKEIGGVALITADHGNAEQMIDSKTGEPHTAHTSNPVRCIYFGNGEVKALKKGKLCDLAPTLLELIGIPKPQEMTGKSLLVKE</sequence>
<name>GPMI1_METAC</name>
<keyword id="KW-0324">Glycolysis</keyword>
<keyword id="KW-0413">Isomerase</keyword>
<keyword id="KW-0464">Manganese</keyword>
<keyword id="KW-0479">Metal-binding</keyword>
<keyword id="KW-1185">Reference proteome</keyword>